<organism>
    <name type="scientific">Acanthamoeba polyphaga mimivirus</name>
    <name type="common">APMV</name>
    <dbReference type="NCBI Taxonomy" id="212035"/>
    <lineage>
        <taxon>Viruses</taxon>
        <taxon>Varidnaviria</taxon>
        <taxon>Bamfordvirae</taxon>
        <taxon>Nucleocytoviricota</taxon>
        <taxon>Megaviricetes</taxon>
        <taxon>Imitervirales</taxon>
        <taxon>Mimiviridae</taxon>
        <taxon>Megamimivirinae</taxon>
        <taxon>Mimivirus</taxon>
        <taxon>Mimivirus bradfordmassiliense</taxon>
    </lineage>
</organism>
<organismHost>
    <name type="scientific">Acanthamoeba polyphaga</name>
    <name type="common">Amoeba</name>
    <dbReference type="NCBI Taxonomy" id="5757"/>
</organismHost>
<comment type="subcellular location">
    <subcellularLocation>
        <location evidence="2">Membrane</location>
        <topology evidence="2">Multi-pass membrane protein</topology>
    </subcellularLocation>
</comment>
<evidence type="ECO:0000255" key="1"/>
<evidence type="ECO:0000305" key="2"/>
<protein>
    <recommendedName>
        <fullName>Uncharacterized protein L20</fullName>
    </recommendedName>
</protein>
<name>YL020_MIMIV</name>
<feature type="chain" id="PRO_0000071182" description="Uncharacterized protein L20">
    <location>
        <begin position="1"/>
        <end position="118"/>
    </location>
</feature>
<feature type="transmembrane region" description="Helical" evidence="1">
    <location>
        <begin position="17"/>
        <end position="37"/>
    </location>
</feature>
<feature type="transmembrane region" description="Helical" evidence="1">
    <location>
        <begin position="60"/>
        <end position="80"/>
    </location>
</feature>
<feature type="transmembrane region" description="Helical" evidence="1">
    <location>
        <begin position="90"/>
        <end position="110"/>
    </location>
</feature>
<reference key="1">
    <citation type="journal article" date="2004" name="Science">
        <title>The 1.2-megabase genome sequence of Mimivirus.</title>
        <authorList>
            <person name="Raoult D."/>
            <person name="Audic S."/>
            <person name="Robert C."/>
            <person name="Abergel C."/>
            <person name="Renesto P."/>
            <person name="Ogata H."/>
            <person name="La Scola B."/>
            <person name="Susan M."/>
            <person name="Claverie J.-M."/>
        </authorList>
    </citation>
    <scope>NUCLEOTIDE SEQUENCE [LARGE SCALE GENOMIC DNA]</scope>
    <source>
        <strain>Rowbotham-Bradford</strain>
    </source>
</reference>
<keyword id="KW-0472">Membrane</keyword>
<keyword id="KW-1185">Reference proteome</keyword>
<keyword id="KW-0812">Transmembrane</keyword>
<keyword id="KW-1133">Transmembrane helix</keyword>
<gene>
    <name type="ordered locus">MIMI_L20</name>
</gene>
<dbReference type="EMBL" id="AY653733">
    <property type="protein sequence ID" value="AAV50295.1"/>
    <property type="molecule type" value="Genomic_DNA"/>
</dbReference>
<dbReference type="SMR" id="Q5UP90"/>
<dbReference type="KEGG" id="vg:9924598"/>
<dbReference type="OrthoDB" id="35081at10239"/>
<dbReference type="Proteomes" id="UP000001134">
    <property type="component" value="Genome"/>
</dbReference>
<dbReference type="GO" id="GO:0016020">
    <property type="term" value="C:membrane"/>
    <property type="evidence" value="ECO:0007669"/>
    <property type="project" value="UniProtKB-SubCell"/>
</dbReference>
<sequence>MFKNMMENMNNKKIAMIIIIFYVITSMVQGNYHFAILGAYFIIKNIFEYKFNKGIELPSINYTIIGTIIGQYTVLIIMIFCRDNFSDNPYIEQILTTNLSIVGYAFGSFWYRCITTQN</sequence>
<proteinExistence type="predicted"/>
<accession>Q5UP90</accession>